<sequence>MELVLKDAQSALEVSETTFGRDFNEALVHQVVVAYAANARQGTRAQKTRAEVTGSGKKPWRQKGTGRARAGGVKGPIWRGGGVTFAAKTQDHSQKVNKKMYRGALKSILSELVRQDRLVVVESFSVEAPKTKELKAKLKAMNLEDVLIVTSEVDENLFLAARNLYKVDVRDVAGLDPVSLIAFNTVLVTADAVKQIEEMLA</sequence>
<reference key="1">
    <citation type="journal article" date="2002" name="Nat. Biotechnol.">
        <title>Genome sequence of the dissimilatory metal ion-reducing bacterium Shewanella oneidensis.</title>
        <authorList>
            <person name="Heidelberg J.F."/>
            <person name="Paulsen I.T."/>
            <person name="Nelson K.E."/>
            <person name="Gaidos E.J."/>
            <person name="Nelson W.C."/>
            <person name="Read T.D."/>
            <person name="Eisen J.A."/>
            <person name="Seshadri R."/>
            <person name="Ward N.L."/>
            <person name="Methe B.A."/>
            <person name="Clayton R.A."/>
            <person name="Meyer T."/>
            <person name="Tsapin A."/>
            <person name="Scott J."/>
            <person name="Beanan M.J."/>
            <person name="Brinkac L.M."/>
            <person name="Daugherty S.C."/>
            <person name="DeBoy R.T."/>
            <person name="Dodson R.J."/>
            <person name="Durkin A.S."/>
            <person name="Haft D.H."/>
            <person name="Kolonay J.F."/>
            <person name="Madupu R."/>
            <person name="Peterson J.D."/>
            <person name="Umayam L.A."/>
            <person name="White O."/>
            <person name="Wolf A.M."/>
            <person name="Vamathevan J.J."/>
            <person name="Weidman J.F."/>
            <person name="Impraim M."/>
            <person name="Lee K."/>
            <person name="Berry K.J."/>
            <person name="Lee C."/>
            <person name="Mueller J."/>
            <person name="Khouri H.M."/>
            <person name="Gill J."/>
            <person name="Utterback T.R."/>
            <person name="McDonald L.A."/>
            <person name="Feldblyum T.V."/>
            <person name="Smith H.O."/>
            <person name="Venter J.C."/>
            <person name="Nealson K.H."/>
            <person name="Fraser C.M."/>
        </authorList>
    </citation>
    <scope>NUCLEOTIDE SEQUENCE [LARGE SCALE GENOMIC DNA]</scope>
    <source>
        <strain>ATCC 700550 / JCM 31522 / CIP 106686 / LMG 19005 / NCIMB 14063 / MR-1</strain>
    </source>
</reference>
<gene>
    <name evidence="1" type="primary">rplD</name>
    <name type="ordered locus">SO_0232</name>
</gene>
<organism>
    <name type="scientific">Shewanella oneidensis (strain ATCC 700550 / JCM 31522 / CIP 106686 / LMG 19005 / NCIMB 14063 / MR-1)</name>
    <dbReference type="NCBI Taxonomy" id="211586"/>
    <lineage>
        <taxon>Bacteria</taxon>
        <taxon>Pseudomonadati</taxon>
        <taxon>Pseudomonadota</taxon>
        <taxon>Gammaproteobacteria</taxon>
        <taxon>Alteromonadales</taxon>
        <taxon>Shewanellaceae</taxon>
        <taxon>Shewanella</taxon>
    </lineage>
</organism>
<evidence type="ECO:0000255" key="1">
    <source>
        <dbReference type="HAMAP-Rule" id="MF_01328"/>
    </source>
</evidence>
<evidence type="ECO:0000256" key="2">
    <source>
        <dbReference type="SAM" id="MobiDB-lite"/>
    </source>
</evidence>
<evidence type="ECO:0000305" key="3"/>
<proteinExistence type="inferred from homology"/>
<keyword id="KW-1185">Reference proteome</keyword>
<keyword id="KW-0687">Ribonucleoprotein</keyword>
<keyword id="KW-0689">Ribosomal protein</keyword>
<keyword id="KW-0694">RNA-binding</keyword>
<keyword id="KW-0699">rRNA-binding</keyword>
<protein>
    <recommendedName>
        <fullName evidence="1">Large ribosomal subunit protein uL4</fullName>
    </recommendedName>
    <alternativeName>
        <fullName evidence="3">50S ribosomal protein L4</fullName>
    </alternativeName>
</protein>
<dbReference type="EMBL" id="AE014299">
    <property type="protein sequence ID" value="AAN53317.1"/>
    <property type="molecule type" value="Genomic_DNA"/>
</dbReference>
<dbReference type="RefSeq" id="NP_715872.1">
    <property type="nucleotide sequence ID" value="NC_004347.2"/>
</dbReference>
<dbReference type="RefSeq" id="WP_011070618.1">
    <property type="nucleotide sequence ID" value="NZ_CP053946.1"/>
</dbReference>
<dbReference type="SMR" id="Q8EK67"/>
<dbReference type="STRING" id="211586.SO_0232"/>
<dbReference type="PaxDb" id="211586-SO_0232"/>
<dbReference type="GeneID" id="94726187"/>
<dbReference type="KEGG" id="son:SO_0232"/>
<dbReference type="PATRIC" id="fig|211586.12.peg.220"/>
<dbReference type="eggNOG" id="COG0088">
    <property type="taxonomic scope" value="Bacteria"/>
</dbReference>
<dbReference type="HOGENOM" id="CLU_041575_5_2_6"/>
<dbReference type="OrthoDB" id="9803201at2"/>
<dbReference type="PhylomeDB" id="Q8EK67"/>
<dbReference type="BioCyc" id="SONE211586:G1GMP-221-MONOMER"/>
<dbReference type="Proteomes" id="UP000008186">
    <property type="component" value="Chromosome"/>
</dbReference>
<dbReference type="GO" id="GO:1990904">
    <property type="term" value="C:ribonucleoprotein complex"/>
    <property type="evidence" value="ECO:0007669"/>
    <property type="project" value="UniProtKB-KW"/>
</dbReference>
<dbReference type="GO" id="GO:0005840">
    <property type="term" value="C:ribosome"/>
    <property type="evidence" value="ECO:0007669"/>
    <property type="project" value="UniProtKB-KW"/>
</dbReference>
<dbReference type="GO" id="GO:0019843">
    <property type="term" value="F:rRNA binding"/>
    <property type="evidence" value="ECO:0007669"/>
    <property type="project" value="UniProtKB-UniRule"/>
</dbReference>
<dbReference type="GO" id="GO:0003735">
    <property type="term" value="F:structural constituent of ribosome"/>
    <property type="evidence" value="ECO:0000318"/>
    <property type="project" value="GO_Central"/>
</dbReference>
<dbReference type="GO" id="GO:0006412">
    <property type="term" value="P:translation"/>
    <property type="evidence" value="ECO:0007669"/>
    <property type="project" value="UniProtKB-UniRule"/>
</dbReference>
<dbReference type="FunFam" id="3.40.1370.10:FF:000001">
    <property type="entry name" value="50S ribosomal protein L4"/>
    <property type="match status" value="1"/>
</dbReference>
<dbReference type="Gene3D" id="3.40.1370.10">
    <property type="match status" value="1"/>
</dbReference>
<dbReference type="HAMAP" id="MF_01328_B">
    <property type="entry name" value="Ribosomal_uL4_B"/>
    <property type="match status" value="1"/>
</dbReference>
<dbReference type="InterPro" id="IPR002136">
    <property type="entry name" value="Ribosomal_uL4"/>
</dbReference>
<dbReference type="InterPro" id="IPR013005">
    <property type="entry name" value="Ribosomal_uL4-like"/>
</dbReference>
<dbReference type="InterPro" id="IPR023574">
    <property type="entry name" value="Ribosomal_uL4_dom_sf"/>
</dbReference>
<dbReference type="NCBIfam" id="TIGR03953">
    <property type="entry name" value="rplD_bact"/>
    <property type="match status" value="1"/>
</dbReference>
<dbReference type="PANTHER" id="PTHR10746">
    <property type="entry name" value="50S RIBOSOMAL PROTEIN L4"/>
    <property type="match status" value="1"/>
</dbReference>
<dbReference type="PANTHER" id="PTHR10746:SF6">
    <property type="entry name" value="LARGE RIBOSOMAL SUBUNIT PROTEIN UL4M"/>
    <property type="match status" value="1"/>
</dbReference>
<dbReference type="Pfam" id="PF00573">
    <property type="entry name" value="Ribosomal_L4"/>
    <property type="match status" value="1"/>
</dbReference>
<dbReference type="SUPFAM" id="SSF52166">
    <property type="entry name" value="Ribosomal protein L4"/>
    <property type="match status" value="1"/>
</dbReference>
<accession>Q8EK67</accession>
<name>RL4_SHEON</name>
<comment type="function">
    <text evidence="1">One of the primary rRNA binding proteins, this protein initially binds near the 5'-end of the 23S rRNA. It is important during the early stages of 50S assembly. It makes multiple contacts with different domains of the 23S rRNA in the assembled 50S subunit and ribosome.</text>
</comment>
<comment type="function">
    <text evidence="1">Forms part of the polypeptide exit tunnel.</text>
</comment>
<comment type="subunit">
    <text evidence="1">Part of the 50S ribosomal subunit.</text>
</comment>
<comment type="similarity">
    <text evidence="1">Belongs to the universal ribosomal protein uL4 family.</text>
</comment>
<feature type="chain" id="PRO_0000129271" description="Large ribosomal subunit protein uL4">
    <location>
        <begin position="1"/>
        <end position="201"/>
    </location>
</feature>
<feature type="region of interest" description="Disordered" evidence="2">
    <location>
        <begin position="45"/>
        <end position="71"/>
    </location>
</feature>